<accession>A6RQZ9</accession>
<accession>A0A384JXA1</accession>
<organism>
    <name type="scientific">Botryotinia fuckeliana (strain B05.10)</name>
    <name type="common">Noble rot fungus</name>
    <name type="synonym">Botrytis cinerea</name>
    <dbReference type="NCBI Taxonomy" id="332648"/>
    <lineage>
        <taxon>Eukaryota</taxon>
        <taxon>Fungi</taxon>
        <taxon>Dikarya</taxon>
        <taxon>Ascomycota</taxon>
        <taxon>Pezizomycotina</taxon>
        <taxon>Leotiomycetes</taxon>
        <taxon>Helotiales</taxon>
        <taxon>Sclerotiniaceae</taxon>
        <taxon>Botrytis</taxon>
    </lineage>
</organism>
<dbReference type="EMBL" id="CP009815">
    <property type="protein sequence ID" value="ATZ55239.1"/>
    <property type="molecule type" value="Genomic_DNA"/>
</dbReference>
<dbReference type="RefSeq" id="XP_001558391.1">
    <property type="nucleotide sequence ID" value="XM_001558341.1"/>
</dbReference>
<dbReference type="SMR" id="A6RQZ9"/>
<dbReference type="EnsemblFungi" id="Bcin11g05170.1">
    <property type="protein sequence ID" value="Bcin11p05170.1"/>
    <property type="gene ID" value="Bcin11g05170"/>
</dbReference>
<dbReference type="GeneID" id="5438999"/>
<dbReference type="KEGG" id="bfu:BCIN_11g05170"/>
<dbReference type="VEuPathDB" id="FungiDB:Bcin11g05170"/>
<dbReference type="OMA" id="WYQSTYF"/>
<dbReference type="OrthoDB" id="10265695at2759"/>
<dbReference type="Proteomes" id="UP000001798">
    <property type="component" value="Chromosome bcin11"/>
</dbReference>
<dbReference type="GO" id="GO:0016282">
    <property type="term" value="C:eukaryotic 43S preinitiation complex"/>
    <property type="evidence" value="ECO:0007669"/>
    <property type="project" value="UniProtKB-UniRule"/>
</dbReference>
<dbReference type="GO" id="GO:0033290">
    <property type="term" value="C:eukaryotic 48S preinitiation complex"/>
    <property type="evidence" value="ECO:0007669"/>
    <property type="project" value="UniProtKB-UniRule"/>
</dbReference>
<dbReference type="GO" id="GO:0005852">
    <property type="term" value="C:eukaryotic translation initiation factor 3 complex"/>
    <property type="evidence" value="ECO:0007669"/>
    <property type="project" value="UniProtKB-UniRule"/>
</dbReference>
<dbReference type="GO" id="GO:0008237">
    <property type="term" value="F:metallopeptidase activity"/>
    <property type="evidence" value="ECO:0007669"/>
    <property type="project" value="InterPro"/>
</dbReference>
<dbReference type="GO" id="GO:0003743">
    <property type="term" value="F:translation initiation factor activity"/>
    <property type="evidence" value="ECO:0007669"/>
    <property type="project" value="UniProtKB-UniRule"/>
</dbReference>
<dbReference type="GO" id="GO:0001732">
    <property type="term" value="P:formation of cytoplasmic translation initiation complex"/>
    <property type="evidence" value="ECO:0007669"/>
    <property type="project" value="UniProtKB-UniRule"/>
</dbReference>
<dbReference type="CDD" id="cd08065">
    <property type="entry name" value="MPN_eIF3h"/>
    <property type="match status" value="1"/>
</dbReference>
<dbReference type="FunFam" id="3.40.140.10:FF:000052">
    <property type="entry name" value="Eukaryotic translation initiation factor 3 subunit H"/>
    <property type="match status" value="1"/>
</dbReference>
<dbReference type="Gene3D" id="3.40.140.10">
    <property type="entry name" value="Cytidine Deaminase, domain 2"/>
    <property type="match status" value="1"/>
</dbReference>
<dbReference type="HAMAP" id="MF_03007">
    <property type="entry name" value="eIF3h"/>
    <property type="match status" value="1"/>
</dbReference>
<dbReference type="InterPro" id="IPR027524">
    <property type="entry name" value="eIF3h"/>
</dbReference>
<dbReference type="InterPro" id="IPR045810">
    <property type="entry name" value="eIF3h_C"/>
</dbReference>
<dbReference type="InterPro" id="IPR000555">
    <property type="entry name" value="JAMM/MPN+_dom"/>
</dbReference>
<dbReference type="InterPro" id="IPR050242">
    <property type="entry name" value="JAMM_MPN+_peptidase_M67A"/>
</dbReference>
<dbReference type="InterPro" id="IPR037518">
    <property type="entry name" value="MPN"/>
</dbReference>
<dbReference type="PANTHER" id="PTHR10410">
    <property type="entry name" value="EUKARYOTIC TRANSLATION INITIATION FACTOR 3 -RELATED"/>
    <property type="match status" value="1"/>
</dbReference>
<dbReference type="Pfam" id="PF19445">
    <property type="entry name" value="eIF3h_C"/>
    <property type="match status" value="1"/>
</dbReference>
<dbReference type="Pfam" id="PF01398">
    <property type="entry name" value="JAB"/>
    <property type="match status" value="1"/>
</dbReference>
<dbReference type="SMART" id="SM00232">
    <property type="entry name" value="JAB_MPN"/>
    <property type="match status" value="1"/>
</dbReference>
<dbReference type="PROSITE" id="PS50249">
    <property type="entry name" value="MPN"/>
    <property type="match status" value="1"/>
</dbReference>
<comment type="function">
    <text evidence="1">Component of the eukaryotic translation initiation factor 3 (eIF-3) complex, which is involved in protein synthesis of a specialized repertoire of mRNAs and, together with other initiation factors, stimulates binding of mRNA and methionyl-tRNAi to the 40S ribosome. The eIF-3 complex specifically targets and initiates translation of a subset of mRNAs involved in cell proliferation.</text>
</comment>
<comment type="subunit">
    <text evidence="1">Component of the eukaryotic translation initiation factor 3 (eIF-3) complex.</text>
</comment>
<comment type="subcellular location">
    <subcellularLocation>
        <location evidence="1">Cytoplasm</location>
    </subcellularLocation>
</comment>
<comment type="similarity">
    <text evidence="1">Belongs to the eIF-3 subunit H family.</text>
</comment>
<proteinExistence type="inferred from homology"/>
<gene>
    <name type="ORF">BC1G_03240</name>
    <name type="ORF">BCIN_11g05170</name>
</gene>
<protein>
    <recommendedName>
        <fullName evidence="1">Eukaryotic translation initiation factor 3 subunit H</fullName>
        <shortName evidence="1">eIF3h</shortName>
    </recommendedName>
</protein>
<sequence length="367" mass="41208">MADIASKEVPLHSVQVEALVVMKIVKACAATYPTTATGSIVGMDSNGTLQITNSFPFPTTDVATSDSHPNDHMAASNIAAAAPRSKANVIYQSEMIKMLKEVNVDANNVGWYTSANMGNFINTSLIENQFFYQKEPNERTVALVHDVSRSAQGALSLRAFRLSPTFMAAYKESKFTTENMQKSKLTYKDILVELPIIVHNSHLLTSFLHQMPVELPKKDLDFPASFADLNRNTPPTPLYPNMESLDLSIDPYLERTCDMLLDSIETHYTELNNFQYFQRQLTREQAKVTAWKAKRTAENATRATQKLAPLPEDEWERLFKLPTEPSRLEGMLNARQVEQYSRQVDGFTASITGKMFAVKSNLLPEQN</sequence>
<feature type="chain" id="PRO_0000366898" description="Eukaryotic translation initiation factor 3 subunit H">
    <location>
        <begin position="1"/>
        <end position="367"/>
    </location>
</feature>
<feature type="domain" description="MPN" evidence="2">
    <location>
        <begin position="14"/>
        <end position="166"/>
    </location>
</feature>
<evidence type="ECO:0000255" key="1">
    <source>
        <dbReference type="HAMAP-Rule" id="MF_03007"/>
    </source>
</evidence>
<evidence type="ECO:0000255" key="2">
    <source>
        <dbReference type="PROSITE-ProRule" id="PRU01182"/>
    </source>
</evidence>
<reference key="1">
    <citation type="journal article" date="2011" name="PLoS Genet.">
        <title>Genomic analysis of the necrotrophic fungal pathogens Sclerotinia sclerotiorum and Botrytis cinerea.</title>
        <authorList>
            <person name="Amselem J."/>
            <person name="Cuomo C.A."/>
            <person name="van Kan J.A.L."/>
            <person name="Viaud M."/>
            <person name="Benito E.P."/>
            <person name="Couloux A."/>
            <person name="Coutinho P.M."/>
            <person name="de Vries R.P."/>
            <person name="Dyer P.S."/>
            <person name="Fillinger S."/>
            <person name="Fournier E."/>
            <person name="Gout L."/>
            <person name="Hahn M."/>
            <person name="Kohn L."/>
            <person name="Lapalu N."/>
            <person name="Plummer K.M."/>
            <person name="Pradier J.-M."/>
            <person name="Quevillon E."/>
            <person name="Sharon A."/>
            <person name="Simon A."/>
            <person name="ten Have A."/>
            <person name="Tudzynski B."/>
            <person name="Tudzynski P."/>
            <person name="Wincker P."/>
            <person name="Andrew M."/>
            <person name="Anthouard V."/>
            <person name="Beever R.E."/>
            <person name="Beffa R."/>
            <person name="Benoit I."/>
            <person name="Bouzid O."/>
            <person name="Brault B."/>
            <person name="Chen Z."/>
            <person name="Choquer M."/>
            <person name="Collemare J."/>
            <person name="Cotton P."/>
            <person name="Danchin E.G."/>
            <person name="Da Silva C."/>
            <person name="Gautier A."/>
            <person name="Giraud C."/>
            <person name="Giraud T."/>
            <person name="Gonzalez C."/>
            <person name="Grossetete S."/>
            <person name="Gueldener U."/>
            <person name="Henrissat B."/>
            <person name="Howlett B.J."/>
            <person name="Kodira C."/>
            <person name="Kretschmer M."/>
            <person name="Lappartient A."/>
            <person name="Leroch M."/>
            <person name="Levis C."/>
            <person name="Mauceli E."/>
            <person name="Neuveglise C."/>
            <person name="Oeser B."/>
            <person name="Pearson M."/>
            <person name="Poulain J."/>
            <person name="Poussereau N."/>
            <person name="Quesneville H."/>
            <person name="Rascle C."/>
            <person name="Schumacher J."/>
            <person name="Segurens B."/>
            <person name="Sexton A."/>
            <person name="Silva E."/>
            <person name="Sirven C."/>
            <person name="Soanes D.M."/>
            <person name="Talbot N.J."/>
            <person name="Templeton M."/>
            <person name="Yandava C."/>
            <person name="Yarden O."/>
            <person name="Zeng Q."/>
            <person name="Rollins J.A."/>
            <person name="Lebrun M.-H."/>
            <person name="Dickman M."/>
        </authorList>
    </citation>
    <scope>NUCLEOTIDE SEQUENCE [LARGE SCALE GENOMIC DNA]</scope>
    <source>
        <strain>B05.10</strain>
    </source>
</reference>
<reference key="2">
    <citation type="journal article" date="2012" name="Eukaryot. Cell">
        <title>Genome update of Botrytis cinerea strains B05.10 and T4.</title>
        <authorList>
            <person name="Staats M."/>
            <person name="van Kan J.A.L."/>
        </authorList>
    </citation>
    <scope>NUCLEOTIDE SEQUENCE [LARGE SCALE GENOMIC DNA]</scope>
    <scope>GENOME REANNOTATION</scope>
    <source>
        <strain>B05.10</strain>
    </source>
</reference>
<reference key="3">
    <citation type="journal article" date="2017" name="Mol. Plant Pathol.">
        <title>A gapless genome sequence of the fungus Botrytis cinerea.</title>
        <authorList>
            <person name="van Kan J.A.L."/>
            <person name="Stassen J.H.M."/>
            <person name="Mosbach A."/>
            <person name="van der Lee T.A.J."/>
            <person name="Faino L."/>
            <person name="Farmer A.D."/>
            <person name="Papasotiriou D.G."/>
            <person name="Zhou S."/>
            <person name="Seidl M.F."/>
            <person name="Cottam E."/>
            <person name="Edel D."/>
            <person name="Hahn M."/>
            <person name="Schwartz D.C."/>
            <person name="Dietrich R.A."/>
            <person name="Widdison S."/>
            <person name="Scalliet G."/>
        </authorList>
    </citation>
    <scope>NUCLEOTIDE SEQUENCE [LARGE SCALE GENOMIC DNA]</scope>
    <scope>GENOME REANNOTATION</scope>
    <source>
        <strain>B05.10</strain>
    </source>
</reference>
<name>EIF3H_BOTFB</name>
<keyword id="KW-0963">Cytoplasm</keyword>
<keyword id="KW-0396">Initiation factor</keyword>
<keyword id="KW-0648">Protein biosynthesis</keyword>
<keyword id="KW-1185">Reference proteome</keyword>